<comment type="similarity">
    <text evidence="2">Belongs to the UDPGP type 1 family.</text>
</comment>
<name>URTF_STAAM</name>
<protein>
    <recommendedName>
        <fullName>Probable uridylyltransferase SAV2171</fullName>
        <ecNumber>2.7.7.-</ecNumber>
    </recommendedName>
</protein>
<keyword id="KW-0548">Nucleotidyltransferase</keyword>
<keyword id="KW-0808">Transferase</keyword>
<reference key="1">
    <citation type="journal article" date="2001" name="Lancet">
        <title>Whole genome sequencing of meticillin-resistant Staphylococcus aureus.</title>
        <authorList>
            <person name="Kuroda M."/>
            <person name="Ohta T."/>
            <person name="Uchiyama I."/>
            <person name="Baba T."/>
            <person name="Yuzawa H."/>
            <person name="Kobayashi I."/>
            <person name="Cui L."/>
            <person name="Oguchi A."/>
            <person name="Aoki K."/>
            <person name="Nagai Y."/>
            <person name="Lian J.-Q."/>
            <person name="Ito T."/>
            <person name="Kanamori M."/>
            <person name="Matsumaru H."/>
            <person name="Maruyama A."/>
            <person name="Murakami H."/>
            <person name="Hosoyama A."/>
            <person name="Mizutani-Ui Y."/>
            <person name="Takahashi N.K."/>
            <person name="Sawano T."/>
            <person name="Inoue R."/>
            <person name="Kaito C."/>
            <person name="Sekimizu K."/>
            <person name="Hirakawa H."/>
            <person name="Kuhara S."/>
            <person name="Goto S."/>
            <person name="Yabuzaki J."/>
            <person name="Kanehisa M."/>
            <person name="Yamashita A."/>
            <person name="Oshima K."/>
            <person name="Furuya K."/>
            <person name="Yoshino C."/>
            <person name="Shiba T."/>
            <person name="Hattori M."/>
            <person name="Ogasawara N."/>
            <person name="Hayashi H."/>
            <person name="Hiramatsu K."/>
        </authorList>
    </citation>
    <scope>NUCLEOTIDE SEQUENCE [LARGE SCALE GENOMIC DNA]</scope>
    <source>
        <strain>Mu50 / ATCC 700699</strain>
    </source>
</reference>
<feature type="chain" id="PRO_0000271310" description="Probable uridylyltransferase SAV2171">
    <location>
        <begin position="1"/>
        <end position="395"/>
    </location>
</feature>
<feature type="binding site" evidence="1">
    <location>
        <begin position="99"/>
        <end position="102"/>
    </location>
    <ligand>
        <name>UTP</name>
        <dbReference type="ChEBI" id="CHEBI:46398"/>
    </ligand>
</feature>
<feature type="binding site" evidence="1">
    <location>
        <position position="113"/>
    </location>
    <ligand>
        <name>UTP</name>
        <dbReference type="ChEBI" id="CHEBI:46398"/>
    </ligand>
</feature>
<feature type="binding site" evidence="1">
    <location>
        <position position="178"/>
    </location>
    <ligand>
        <name>UTP</name>
        <dbReference type="ChEBI" id="CHEBI:46398"/>
    </ligand>
</feature>
<feature type="binding site" evidence="1">
    <location>
        <position position="204"/>
    </location>
    <ligand>
        <name>UTP</name>
        <dbReference type="ChEBI" id="CHEBI:46398"/>
    </ligand>
</feature>
<feature type="binding site" evidence="1">
    <location>
        <position position="235"/>
    </location>
    <ligand>
        <name>UTP</name>
        <dbReference type="ChEBI" id="CHEBI:46398"/>
    </ligand>
</feature>
<feature type="binding site" evidence="1">
    <location>
        <position position="344"/>
    </location>
    <ligand>
        <name>UTP</name>
        <dbReference type="ChEBI" id="CHEBI:46398"/>
    </ligand>
</feature>
<organism>
    <name type="scientific">Staphylococcus aureus (strain Mu50 / ATCC 700699)</name>
    <dbReference type="NCBI Taxonomy" id="158878"/>
    <lineage>
        <taxon>Bacteria</taxon>
        <taxon>Bacillati</taxon>
        <taxon>Bacillota</taxon>
        <taxon>Bacilli</taxon>
        <taxon>Bacillales</taxon>
        <taxon>Staphylococcaceae</taxon>
        <taxon>Staphylococcus</taxon>
    </lineage>
</organism>
<sequence>MLDKNQLAKYKQDHLCEYEKIMSNNEKEALEEKVASLDLDFIAKLYNDLYINKKTIDDVSAVSEVKYDIKSQMSDDEIKRLEEQGLQAIKEGQFAVLLMAGGQGTRLGYKGPKGSFEIEGVSLFELQANQLKTLNHQSGHTIQWYIMTSDINHEETLAYFEAHSYFGYDQEAIHFFKQDNIVALSEEGKLILNQQGRIMETPNGNGGVFKSLDKAGYLEEMSNNGVKYIFLNNIDNVLVKVLDPLFAGFTVEHDYDITSKTIQPKPGESVGRLVNVDCKDTVLEYSELDPEVANQFNNANIGIHAFKLGFILNAVNRELPYHLAIKNLKQLDENFGVIEQPTLKFELFYFDIFTYGTSFVTLQVPREEEFSPLKNKEGKDSVATATEDLRRMGLI</sequence>
<gene>
    <name type="ordered locus">SAV2171</name>
</gene>
<proteinExistence type="inferred from homology"/>
<evidence type="ECO:0000250" key="1">
    <source>
        <dbReference type="UniProtKB" id="Q9M9P3"/>
    </source>
</evidence>
<evidence type="ECO:0000305" key="2"/>
<accession>Q99S95</accession>
<dbReference type="EC" id="2.7.7.-"/>
<dbReference type="EMBL" id="BA000017">
    <property type="protein sequence ID" value="BAB58333.1"/>
    <property type="molecule type" value="Genomic_DNA"/>
</dbReference>
<dbReference type="RefSeq" id="WP_000884735.1">
    <property type="nucleotide sequence ID" value="NC_002758.2"/>
</dbReference>
<dbReference type="SMR" id="Q99S95"/>
<dbReference type="KEGG" id="sav:SAV2171"/>
<dbReference type="HOGENOM" id="CLU_025603_1_2_9"/>
<dbReference type="Proteomes" id="UP000002481">
    <property type="component" value="Chromosome"/>
</dbReference>
<dbReference type="GO" id="GO:0070569">
    <property type="term" value="F:uridylyltransferase activity"/>
    <property type="evidence" value="ECO:0007669"/>
    <property type="project" value="InterPro"/>
</dbReference>
<dbReference type="CDD" id="cd04193">
    <property type="entry name" value="UDPGlcNAc_PPase"/>
    <property type="match status" value="1"/>
</dbReference>
<dbReference type="Gene3D" id="3.90.550.10">
    <property type="entry name" value="Spore Coat Polysaccharide Biosynthesis Protein SpsA, Chain A"/>
    <property type="match status" value="1"/>
</dbReference>
<dbReference type="InterPro" id="IPR029044">
    <property type="entry name" value="Nucleotide-diphossugar_trans"/>
</dbReference>
<dbReference type="InterPro" id="IPR039741">
    <property type="entry name" value="UDP-sugar_pyrophosphorylase"/>
</dbReference>
<dbReference type="InterPro" id="IPR002618">
    <property type="entry name" value="UDPGP_fam"/>
</dbReference>
<dbReference type="PANTHER" id="PTHR11952:SF2">
    <property type="entry name" value="LD24639P"/>
    <property type="match status" value="1"/>
</dbReference>
<dbReference type="PANTHER" id="PTHR11952">
    <property type="entry name" value="UDP- GLUCOSE PYROPHOSPHORYLASE"/>
    <property type="match status" value="1"/>
</dbReference>
<dbReference type="Pfam" id="PF01704">
    <property type="entry name" value="UDPGP"/>
    <property type="match status" value="1"/>
</dbReference>
<dbReference type="SUPFAM" id="SSF53448">
    <property type="entry name" value="Nucleotide-diphospho-sugar transferases"/>
    <property type="match status" value="1"/>
</dbReference>